<protein>
    <recommendedName>
        <fullName evidence="1">Ribonuclease Z</fullName>
        <shortName evidence="1">RNase Z</shortName>
        <ecNumber evidence="1">3.1.26.11</ecNumber>
    </recommendedName>
    <alternativeName>
        <fullName evidence="1">tRNA 3 endonuclease</fullName>
    </alternativeName>
    <alternativeName>
        <fullName evidence="1">tRNase Z</fullName>
    </alternativeName>
</protein>
<keyword id="KW-0255">Endonuclease</keyword>
<keyword id="KW-0378">Hydrolase</keyword>
<keyword id="KW-0479">Metal-binding</keyword>
<keyword id="KW-0540">Nuclease</keyword>
<keyword id="KW-0819">tRNA processing</keyword>
<keyword id="KW-0862">Zinc</keyword>
<comment type="function">
    <text evidence="1">Zinc phosphodiesterase, which displays some tRNA 3'-processing endonuclease activity. Probably involved in tRNA maturation, by removing a 3'-trailer from precursor tRNA.</text>
</comment>
<comment type="catalytic activity">
    <reaction evidence="1">
        <text>Endonucleolytic cleavage of RNA, removing extra 3' nucleotides from tRNA precursor, generating 3' termini of tRNAs. A 3'-hydroxy group is left at the tRNA terminus and a 5'-phosphoryl group is left at the trailer molecule.</text>
        <dbReference type="EC" id="3.1.26.11"/>
    </reaction>
</comment>
<comment type="cofactor">
    <cofactor evidence="1">
        <name>Zn(2+)</name>
        <dbReference type="ChEBI" id="CHEBI:29105"/>
    </cofactor>
    <text evidence="1">Binds 2 Zn(2+) ions.</text>
</comment>
<comment type="subunit">
    <text evidence="1">Homodimer.</text>
</comment>
<comment type="similarity">
    <text evidence="1">Belongs to the RNase Z family.</text>
</comment>
<accession>Q64XI2</accession>
<evidence type="ECO:0000255" key="1">
    <source>
        <dbReference type="HAMAP-Rule" id="MF_01818"/>
    </source>
</evidence>
<sequence length="304" mass="34474">MEKFELHILGCGSALPTTRHFATSQVVNLRDKLFMIDCGEGAQMQLRKSRLKFSRLNHIFISHLHGDHCFGLMGLISTFGLLGRTAELHIHSPKGLEELLTPMLNFFCHTLAYKVIFHEFDTRQTSVVYEDRSMTVTTIPLQHRIPCCGFLFAEKARPNHIIRDMVDFYKVPVYELNRIKNGSDYVTPEGEVIANTRLTRPSDPPRKYAYCSDTIFRPEIVEQLSGVDLLFHEATFAESELARAKETYHTTAAQAARIALEAGVRQLVIGHFSARYEDESILLKEASAVFPNTILAKENLCISL</sequence>
<dbReference type="EC" id="3.1.26.11" evidence="1"/>
<dbReference type="EMBL" id="AP006841">
    <property type="protein sequence ID" value="BAD47794.1"/>
    <property type="molecule type" value="Genomic_DNA"/>
</dbReference>
<dbReference type="RefSeq" id="WP_005801215.1">
    <property type="nucleotide sequence ID" value="NZ_UYXF01000020.1"/>
</dbReference>
<dbReference type="RefSeq" id="YP_098328.1">
    <property type="nucleotide sequence ID" value="NC_006347.1"/>
</dbReference>
<dbReference type="SMR" id="Q64XI2"/>
<dbReference type="STRING" id="295405.BF1044"/>
<dbReference type="KEGG" id="bfr:BF1044"/>
<dbReference type="PATRIC" id="fig|295405.11.peg.1036"/>
<dbReference type="HOGENOM" id="CLU_031317_2_1_10"/>
<dbReference type="OrthoDB" id="9800940at2"/>
<dbReference type="Proteomes" id="UP000002197">
    <property type="component" value="Chromosome"/>
</dbReference>
<dbReference type="GO" id="GO:0042781">
    <property type="term" value="F:3'-tRNA processing endoribonuclease activity"/>
    <property type="evidence" value="ECO:0007669"/>
    <property type="project" value="UniProtKB-UniRule"/>
</dbReference>
<dbReference type="GO" id="GO:0008270">
    <property type="term" value="F:zinc ion binding"/>
    <property type="evidence" value="ECO:0007669"/>
    <property type="project" value="UniProtKB-UniRule"/>
</dbReference>
<dbReference type="CDD" id="cd07717">
    <property type="entry name" value="RNaseZ_ZiPD-like_MBL-fold"/>
    <property type="match status" value="1"/>
</dbReference>
<dbReference type="Gene3D" id="3.60.15.10">
    <property type="entry name" value="Ribonuclease Z/Hydroxyacylglutathione hydrolase-like"/>
    <property type="match status" value="1"/>
</dbReference>
<dbReference type="HAMAP" id="MF_01818">
    <property type="entry name" value="RNase_Z_BN"/>
    <property type="match status" value="1"/>
</dbReference>
<dbReference type="InterPro" id="IPR001279">
    <property type="entry name" value="Metallo-B-lactamas"/>
</dbReference>
<dbReference type="InterPro" id="IPR036866">
    <property type="entry name" value="RibonucZ/Hydroxyglut_hydro"/>
</dbReference>
<dbReference type="InterPro" id="IPR013471">
    <property type="entry name" value="RNase_Z/BN"/>
</dbReference>
<dbReference type="NCBIfam" id="NF000801">
    <property type="entry name" value="PRK00055.1-3"/>
    <property type="match status" value="1"/>
</dbReference>
<dbReference type="NCBIfam" id="TIGR02651">
    <property type="entry name" value="RNase_Z"/>
    <property type="match status" value="1"/>
</dbReference>
<dbReference type="PANTHER" id="PTHR46018">
    <property type="entry name" value="ZINC PHOSPHODIESTERASE ELAC PROTEIN 1"/>
    <property type="match status" value="1"/>
</dbReference>
<dbReference type="PANTHER" id="PTHR46018:SF2">
    <property type="entry name" value="ZINC PHOSPHODIESTERASE ELAC PROTEIN 1"/>
    <property type="match status" value="1"/>
</dbReference>
<dbReference type="Pfam" id="PF12706">
    <property type="entry name" value="Lactamase_B_2"/>
    <property type="match status" value="2"/>
</dbReference>
<dbReference type="SUPFAM" id="SSF56281">
    <property type="entry name" value="Metallo-hydrolase/oxidoreductase"/>
    <property type="match status" value="1"/>
</dbReference>
<proteinExistence type="inferred from homology"/>
<gene>
    <name evidence="1" type="primary">rnz</name>
    <name type="ordered locus">BF1044</name>
</gene>
<name>RNZ_BACFR</name>
<reference key="1">
    <citation type="journal article" date="2004" name="Proc. Natl. Acad. Sci. U.S.A.">
        <title>Genomic analysis of Bacteroides fragilis reveals extensive DNA inversions regulating cell surface adaptation.</title>
        <authorList>
            <person name="Kuwahara T."/>
            <person name="Yamashita A."/>
            <person name="Hirakawa H."/>
            <person name="Nakayama H."/>
            <person name="Toh H."/>
            <person name="Okada N."/>
            <person name="Kuhara S."/>
            <person name="Hattori M."/>
            <person name="Hayashi T."/>
            <person name="Ohnishi Y."/>
        </authorList>
    </citation>
    <scope>NUCLEOTIDE SEQUENCE [LARGE SCALE GENOMIC DNA]</scope>
    <source>
        <strain>YCH46</strain>
    </source>
</reference>
<organism>
    <name type="scientific">Bacteroides fragilis (strain YCH46)</name>
    <dbReference type="NCBI Taxonomy" id="295405"/>
    <lineage>
        <taxon>Bacteria</taxon>
        <taxon>Pseudomonadati</taxon>
        <taxon>Bacteroidota</taxon>
        <taxon>Bacteroidia</taxon>
        <taxon>Bacteroidales</taxon>
        <taxon>Bacteroidaceae</taxon>
        <taxon>Bacteroides</taxon>
    </lineage>
</organism>
<feature type="chain" id="PRO_0000155844" description="Ribonuclease Z">
    <location>
        <begin position="1"/>
        <end position="304"/>
    </location>
</feature>
<feature type="active site" description="Proton acceptor" evidence="1">
    <location>
        <position position="67"/>
    </location>
</feature>
<feature type="binding site" evidence="1">
    <location>
        <position position="63"/>
    </location>
    <ligand>
        <name>Zn(2+)</name>
        <dbReference type="ChEBI" id="CHEBI:29105"/>
        <label>1</label>
        <note>catalytic</note>
    </ligand>
</feature>
<feature type="binding site" evidence="1">
    <location>
        <position position="65"/>
    </location>
    <ligand>
        <name>Zn(2+)</name>
        <dbReference type="ChEBI" id="CHEBI:29105"/>
        <label>1</label>
        <note>catalytic</note>
    </ligand>
</feature>
<feature type="binding site" evidence="1">
    <location>
        <position position="67"/>
    </location>
    <ligand>
        <name>Zn(2+)</name>
        <dbReference type="ChEBI" id="CHEBI:29105"/>
        <label>2</label>
        <note>catalytic</note>
    </ligand>
</feature>
<feature type="binding site" evidence="1">
    <location>
        <position position="68"/>
    </location>
    <ligand>
        <name>Zn(2+)</name>
        <dbReference type="ChEBI" id="CHEBI:29105"/>
        <label>2</label>
        <note>catalytic</note>
    </ligand>
</feature>
<feature type="binding site" evidence="1">
    <location>
        <position position="143"/>
    </location>
    <ligand>
        <name>Zn(2+)</name>
        <dbReference type="ChEBI" id="CHEBI:29105"/>
        <label>1</label>
        <note>catalytic</note>
    </ligand>
</feature>
<feature type="binding site" evidence="1">
    <location>
        <position position="213"/>
    </location>
    <ligand>
        <name>Zn(2+)</name>
        <dbReference type="ChEBI" id="CHEBI:29105"/>
        <label>1</label>
        <note>catalytic</note>
    </ligand>
</feature>
<feature type="binding site" evidence="1">
    <location>
        <position position="213"/>
    </location>
    <ligand>
        <name>Zn(2+)</name>
        <dbReference type="ChEBI" id="CHEBI:29105"/>
        <label>2</label>
        <note>catalytic</note>
    </ligand>
</feature>
<feature type="binding site" evidence="1">
    <location>
        <position position="271"/>
    </location>
    <ligand>
        <name>Zn(2+)</name>
        <dbReference type="ChEBI" id="CHEBI:29105"/>
        <label>2</label>
        <note>catalytic</note>
    </ligand>
</feature>